<reference key="1">
    <citation type="journal article" date="1991" name="Antimicrob. Agents Chemother.">
        <title>Nucleotide sequence and phylogeny of a chloramphenicol acetyltransferase encoded by the plasmid pSCS7 from Staphylococcus aureus.</title>
        <authorList>
            <person name="Schwarz S."/>
            <person name="Cardoso M."/>
        </authorList>
    </citation>
    <scope>NUCLEOTIDE SEQUENCE [GENOMIC DNA]</scope>
    <source>
        <strain>436</strain>
        <plasmid>pSCS7</plasmid>
    </source>
</reference>
<reference key="2">
    <citation type="journal article" date="1992" name="J. Appl. Bacteriol.">
        <title>Nucleotide sequence and structural relationships of a chloramphenicol acetyltransferase encoded by the plasmid pSCS6 from Staphylococcus aureus.</title>
        <authorList>
            <person name="Cardoso M."/>
            <person name="Schwarz S."/>
        </authorList>
    </citation>
    <scope>NUCLEOTIDE SEQUENCE [GENOMIC DNA]</scope>
    <source>
        <plasmid>pSCS6</plasmid>
    </source>
</reference>
<reference key="3">
    <citation type="journal article" date="1985" name="EMBO J.">
        <title>Regulation of the inducible chloramphenicol acetyltransferase gene of the Staphylococcus aureus plasmid pUB112.</title>
        <authorList>
            <person name="Brueckner R."/>
            <person name="Matzura H."/>
        </authorList>
    </citation>
    <scope>NUCLEOTIDE SEQUENCE [GENOMIC DNA]</scope>
    <source>
        <plasmid>pUB112</plasmid>
    </source>
</reference>
<organism>
    <name type="scientific">Staphylococcus aureus</name>
    <dbReference type="NCBI Taxonomy" id="1280"/>
    <lineage>
        <taxon>Bacteria</taxon>
        <taxon>Bacillati</taxon>
        <taxon>Bacillota</taxon>
        <taxon>Bacilli</taxon>
        <taxon>Bacillales</taxon>
        <taxon>Staphylococcaceae</taxon>
        <taxon>Staphylococcus</taxon>
    </lineage>
</organism>
<proteinExistence type="predicted"/>
<keyword id="KW-0046">Antibiotic resistance</keyword>
<keyword id="KW-0428">Leader peptide</keyword>
<keyword id="KW-0614">Plasmid</keyword>
<accession>P0A061</accession>
<accession>P36884</accession>
<sequence length="9" mass="1074">MKKSEDYSS</sequence>
<dbReference type="EMBL" id="M58515">
    <property type="protein sequence ID" value="AAA26612.1"/>
    <property type="molecule type" value="Genomic_DNA"/>
</dbReference>
<dbReference type="EMBL" id="M58516">
    <property type="protein sequence ID" value="AAA16528.1"/>
    <property type="molecule type" value="Unassigned_DNA"/>
</dbReference>
<dbReference type="EMBL" id="X02872">
    <property type="protein sequence ID" value="CAA26630.1"/>
    <property type="molecule type" value="Genomic_DNA"/>
</dbReference>
<dbReference type="EMBL" id="X60827">
    <property type="protein sequence ID" value="CAA43217.1"/>
    <property type="molecule type" value="Genomic_DNA"/>
</dbReference>
<dbReference type="PIR" id="B24362">
    <property type="entry name" value="B24362"/>
</dbReference>
<dbReference type="GO" id="GO:0046677">
    <property type="term" value="P:response to antibiotic"/>
    <property type="evidence" value="ECO:0007669"/>
    <property type="project" value="UniProtKB-KW"/>
</dbReference>
<protein>
    <recommendedName>
        <fullName>Chloramphenicol resistance leader peptide</fullName>
    </recommendedName>
</protein>
<name>LPCA_STAAU</name>
<geneLocation type="plasmid">
    <name>pSCS6</name>
</geneLocation>
<geneLocation type="plasmid">
    <name>pSCS7</name>
</geneLocation>
<geneLocation type="plasmid">
    <name>pUB112</name>
</geneLocation>
<feature type="peptide" id="PRO_0000044018" description="Chloramphenicol resistance leader peptide">
    <location>
        <begin position="1"/>
        <end position="9"/>
    </location>
</feature>